<protein>
    <recommendedName>
        <fullName evidence="1">Glycogen synthase</fullName>
        <ecNumber evidence="1">2.4.1.21</ecNumber>
    </recommendedName>
    <alternativeName>
        <fullName evidence="1">Starch [bacterial glycogen] synthase</fullName>
    </alternativeName>
</protein>
<comment type="function">
    <text evidence="1">Synthesizes alpha-1,4-glucan chains using ADP-glucose.</text>
</comment>
<comment type="catalytic activity">
    <reaction evidence="1">
        <text>[(1-&gt;4)-alpha-D-glucosyl](n) + ADP-alpha-D-glucose = [(1-&gt;4)-alpha-D-glucosyl](n+1) + ADP + H(+)</text>
        <dbReference type="Rhea" id="RHEA:18189"/>
        <dbReference type="Rhea" id="RHEA-COMP:9584"/>
        <dbReference type="Rhea" id="RHEA-COMP:9587"/>
        <dbReference type="ChEBI" id="CHEBI:15378"/>
        <dbReference type="ChEBI" id="CHEBI:15444"/>
        <dbReference type="ChEBI" id="CHEBI:57498"/>
        <dbReference type="ChEBI" id="CHEBI:456216"/>
        <dbReference type="EC" id="2.4.1.21"/>
    </reaction>
</comment>
<comment type="pathway">
    <text evidence="1">Glycan biosynthesis; glycogen biosynthesis.</text>
</comment>
<comment type="similarity">
    <text evidence="1">Belongs to the glycosyltransferase 1 family. Bacterial/plant glycogen synthase subfamily.</text>
</comment>
<proteinExistence type="inferred from homology"/>
<name>GLGA_XANC8</name>
<accession>Q4UZL8</accession>
<feature type="chain" id="PRO_0000230272" description="Glycogen synthase">
    <location>
        <begin position="1"/>
        <end position="474"/>
    </location>
</feature>
<feature type="binding site" evidence="1">
    <location>
        <position position="12"/>
    </location>
    <ligand>
        <name>ADP-alpha-D-glucose</name>
        <dbReference type="ChEBI" id="CHEBI:57498"/>
    </ligand>
</feature>
<gene>
    <name evidence="1" type="primary">glgA</name>
    <name type="ordered locus">XC_0421</name>
</gene>
<dbReference type="EC" id="2.4.1.21" evidence="1"/>
<dbReference type="EMBL" id="CP000050">
    <property type="protein sequence ID" value="AAY47505.1"/>
    <property type="molecule type" value="Genomic_DNA"/>
</dbReference>
<dbReference type="SMR" id="Q4UZL8"/>
<dbReference type="CAZy" id="GT5">
    <property type="family name" value="Glycosyltransferase Family 5"/>
</dbReference>
<dbReference type="KEGG" id="xcb:XC_0421"/>
<dbReference type="HOGENOM" id="CLU_009583_18_2_6"/>
<dbReference type="UniPathway" id="UPA00164"/>
<dbReference type="Proteomes" id="UP000000420">
    <property type="component" value="Chromosome"/>
</dbReference>
<dbReference type="GO" id="GO:0009011">
    <property type="term" value="F:alpha-1,4-glucan glucosyltransferase (ADP-glucose donor) activity"/>
    <property type="evidence" value="ECO:0007669"/>
    <property type="project" value="UniProtKB-UniRule"/>
</dbReference>
<dbReference type="GO" id="GO:0004373">
    <property type="term" value="F:alpha-1,4-glucan glucosyltransferase (UDP-glucose donor) activity"/>
    <property type="evidence" value="ECO:0007669"/>
    <property type="project" value="InterPro"/>
</dbReference>
<dbReference type="GO" id="GO:0005978">
    <property type="term" value="P:glycogen biosynthetic process"/>
    <property type="evidence" value="ECO:0007669"/>
    <property type="project" value="UniProtKB-UniRule"/>
</dbReference>
<dbReference type="CDD" id="cd03791">
    <property type="entry name" value="GT5_Glycogen_synthase_DULL1-like"/>
    <property type="match status" value="1"/>
</dbReference>
<dbReference type="Gene3D" id="3.40.50.2000">
    <property type="entry name" value="Glycogen Phosphorylase B"/>
    <property type="match status" value="2"/>
</dbReference>
<dbReference type="HAMAP" id="MF_00484">
    <property type="entry name" value="Glycogen_synth"/>
    <property type="match status" value="1"/>
</dbReference>
<dbReference type="InterPro" id="IPR001296">
    <property type="entry name" value="Glyco_trans_1"/>
</dbReference>
<dbReference type="InterPro" id="IPR011835">
    <property type="entry name" value="GS/SS"/>
</dbReference>
<dbReference type="InterPro" id="IPR013534">
    <property type="entry name" value="Starch_synth_cat_dom"/>
</dbReference>
<dbReference type="NCBIfam" id="TIGR02095">
    <property type="entry name" value="glgA"/>
    <property type="match status" value="1"/>
</dbReference>
<dbReference type="NCBIfam" id="NF001899">
    <property type="entry name" value="PRK00654.1-2"/>
    <property type="match status" value="1"/>
</dbReference>
<dbReference type="NCBIfam" id="NF001901">
    <property type="entry name" value="PRK00654.1-5"/>
    <property type="match status" value="1"/>
</dbReference>
<dbReference type="PANTHER" id="PTHR45825:SF8">
    <property type="entry name" value="GLYCOGEN SYNTHASE"/>
    <property type="match status" value="1"/>
</dbReference>
<dbReference type="PANTHER" id="PTHR45825">
    <property type="entry name" value="GRANULE-BOUND STARCH SYNTHASE 1, CHLOROPLASTIC/AMYLOPLASTIC"/>
    <property type="match status" value="1"/>
</dbReference>
<dbReference type="Pfam" id="PF08323">
    <property type="entry name" value="Glyco_transf_5"/>
    <property type="match status" value="1"/>
</dbReference>
<dbReference type="Pfam" id="PF00534">
    <property type="entry name" value="Glycos_transf_1"/>
    <property type="match status" value="1"/>
</dbReference>
<dbReference type="SUPFAM" id="SSF53756">
    <property type="entry name" value="UDP-Glycosyltransferase/glycogen phosphorylase"/>
    <property type="match status" value="1"/>
</dbReference>
<evidence type="ECO:0000255" key="1">
    <source>
        <dbReference type="HAMAP-Rule" id="MF_00484"/>
    </source>
</evidence>
<sequence length="474" mass="50895">MFVVSEMADFIKAGGLGDVAAALPRALRHRYDVRVLIPGYRAVLARAGKVEIVGRVLAHAALPACDIGRIVQSDGLPIYILLSKELFERDGSPYVSTSGSEFEDNAIRFATLSHAAAQIAAGRAGLGWRPRLLHLNDWPCALAAAYVRWSGGTTPCLLTIHNLAYQGLVPYSMAAALGIPAERVSELEFYGQMSFLRGGIVHADHVNTVSVSYAQQITGPAQGCGLDRLLAGRAAKGALSGIVNGIDASWDPRTDEYLDSHFSVNHWQGRQANAAQVRKAFGLRESTGPLFAVVSRLVHQKGLDLICEVAPQIVAAGGQIAVIGGGEPEIEQQVAELTRRYPGQVGAFIGFEEGLARRMFAGADFLLMPSRFEPCGLSQMYAQRFGCLPIAHATGGLIDTVDDGVTGFLFQQASAEALRRCLERAFRTFRLPSLLSAMRRAAMLRPSGWDVAGKKYISLYERTAATAPAVATVS</sequence>
<reference key="1">
    <citation type="journal article" date="2005" name="Genome Res.">
        <title>Comparative and functional genomic analyses of the pathogenicity of phytopathogen Xanthomonas campestris pv. campestris.</title>
        <authorList>
            <person name="Qian W."/>
            <person name="Jia Y."/>
            <person name="Ren S.-X."/>
            <person name="He Y.-Q."/>
            <person name="Feng J.-X."/>
            <person name="Lu L.-F."/>
            <person name="Sun Q."/>
            <person name="Ying G."/>
            <person name="Tang D.-J."/>
            <person name="Tang H."/>
            <person name="Wu W."/>
            <person name="Hao P."/>
            <person name="Wang L."/>
            <person name="Jiang B.-L."/>
            <person name="Zeng S."/>
            <person name="Gu W.-Y."/>
            <person name="Lu G."/>
            <person name="Rong L."/>
            <person name="Tian Y."/>
            <person name="Yao Z."/>
            <person name="Fu G."/>
            <person name="Chen B."/>
            <person name="Fang R."/>
            <person name="Qiang B."/>
            <person name="Chen Z."/>
            <person name="Zhao G.-P."/>
            <person name="Tang J.-L."/>
            <person name="He C."/>
        </authorList>
    </citation>
    <scope>NUCLEOTIDE SEQUENCE [LARGE SCALE GENOMIC DNA]</scope>
    <source>
        <strain>8004</strain>
    </source>
</reference>
<organism>
    <name type="scientific">Xanthomonas campestris pv. campestris (strain 8004)</name>
    <dbReference type="NCBI Taxonomy" id="314565"/>
    <lineage>
        <taxon>Bacteria</taxon>
        <taxon>Pseudomonadati</taxon>
        <taxon>Pseudomonadota</taxon>
        <taxon>Gammaproteobacteria</taxon>
        <taxon>Lysobacterales</taxon>
        <taxon>Lysobacteraceae</taxon>
        <taxon>Xanthomonas</taxon>
    </lineage>
</organism>
<keyword id="KW-0320">Glycogen biosynthesis</keyword>
<keyword id="KW-0328">Glycosyltransferase</keyword>
<keyword id="KW-0808">Transferase</keyword>